<proteinExistence type="inferred from homology"/>
<keyword id="KW-0067">ATP-binding</keyword>
<keyword id="KW-0418">Kinase</keyword>
<keyword id="KW-0545">Nucleotide biosynthesis</keyword>
<keyword id="KW-0547">Nucleotide-binding</keyword>
<keyword id="KW-0808">Transferase</keyword>
<gene>
    <name evidence="1" type="primary">tmk</name>
    <name type="ordered locus">NATL1_02021</name>
</gene>
<dbReference type="EC" id="2.7.4.9" evidence="1"/>
<dbReference type="EMBL" id="CP000553">
    <property type="protein sequence ID" value="ABM74766.1"/>
    <property type="molecule type" value="Genomic_DNA"/>
</dbReference>
<dbReference type="RefSeq" id="WP_011822990.1">
    <property type="nucleotide sequence ID" value="NC_008819.1"/>
</dbReference>
<dbReference type="SMR" id="A2BZV6"/>
<dbReference type="KEGG" id="pme:NATL1_02021"/>
<dbReference type="eggNOG" id="COG0125">
    <property type="taxonomic scope" value="Bacteria"/>
</dbReference>
<dbReference type="HOGENOM" id="CLU_049131_0_0_3"/>
<dbReference type="Proteomes" id="UP000002592">
    <property type="component" value="Chromosome"/>
</dbReference>
<dbReference type="GO" id="GO:0005829">
    <property type="term" value="C:cytosol"/>
    <property type="evidence" value="ECO:0007669"/>
    <property type="project" value="TreeGrafter"/>
</dbReference>
<dbReference type="GO" id="GO:0005524">
    <property type="term" value="F:ATP binding"/>
    <property type="evidence" value="ECO:0007669"/>
    <property type="project" value="UniProtKB-UniRule"/>
</dbReference>
<dbReference type="GO" id="GO:0004798">
    <property type="term" value="F:dTMP kinase activity"/>
    <property type="evidence" value="ECO:0007669"/>
    <property type="project" value="UniProtKB-UniRule"/>
</dbReference>
<dbReference type="GO" id="GO:0006233">
    <property type="term" value="P:dTDP biosynthetic process"/>
    <property type="evidence" value="ECO:0007669"/>
    <property type="project" value="InterPro"/>
</dbReference>
<dbReference type="GO" id="GO:0006235">
    <property type="term" value="P:dTTP biosynthetic process"/>
    <property type="evidence" value="ECO:0007669"/>
    <property type="project" value="UniProtKB-UniRule"/>
</dbReference>
<dbReference type="GO" id="GO:0006227">
    <property type="term" value="P:dUDP biosynthetic process"/>
    <property type="evidence" value="ECO:0007669"/>
    <property type="project" value="TreeGrafter"/>
</dbReference>
<dbReference type="CDD" id="cd01672">
    <property type="entry name" value="TMPK"/>
    <property type="match status" value="1"/>
</dbReference>
<dbReference type="FunFam" id="3.40.50.300:FF:000225">
    <property type="entry name" value="Thymidylate kinase"/>
    <property type="match status" value="1"/>
</dbReference>
<dbReference type="Gene3D" id="3.40.50.300">
    <property type="entry name" value="P-loop containing nucleotide triphosphate hydrolases"/>
    <property type="match status" value="1"/>
</dbReference>
<dbReference type="HAMAP" id="MF_00165">
    <property type="entry name" value="Thymidylate_kinase"/>
    <property type="match status" value="1"/>
</dbReference>
<dbReference type="InterPro" id="IPR027417">
    <property type="entry name" value="P-loop_NTPase"/>
</dbReference>
<dbReference type="InterPro" id="IPR039430">
    <property type="entry name" value="Thymidylate_kin-like_dom"/>
</dbReference>
<dbReference type="InterPro" id="IPR018095">
    <property type="entry name" value="Thymidylate_kin_CS"/>
</dbReference>
<dbReference type="InterPro" id="IPR018094">
    <property type="entry name" value="Thymidylate_kinase"/>
</dbReference>
<dbReference type="NCBIfam" id="TIGR00041">
    <property type="entry name" value="DTMP_kinase"/>
    <property type="match status" value="1"/>
</dbReference>
<dbReference type="PANTHER" id="PTHR10344">
    <property type="entry name" value="THYMIDYLATE KINASE"/>
    <property type="match status" value="1"/>
</dbReference>
<dbReference type="PANTHER" id="PTHR10344:SF4">
    <property type="entry name" value="UMP-CMP KINASE 2, MITOCHONDRIAL"/>
    <property type="match status" value="1"/>
</dbReference>
<dbReference type="Pfam" id="PF02223">
    <property type="entry name" value="Thymidylate_kin"/>
    <property type="match status" value="1"/>
</dbReference>
<dbReference type="SUPFAM" id="SSF52540">
    <property type="entry name" value="P-loop containing nucleoside triphosphate hydrolases"/>
    <property type="match status" value="1"/>
</dbReference>
<dbReference type="PROSITE" id="PS01331">
    <property type="entry name" value="THYMIDYLATE_KINASE"/>
    <property type="match status" value="1"/>
</dbReference>
<evidence type="ECO:0000255" key="1">
    <source>
        <dbReference type="HAMAP-Rule" id="MF_00165"/>
    </source>
</evidence>
<comment type="function">
    <text evidence="1">Phosphorylation of dTMP to form dTDP in both de novo and salvage pathways of dTTP synthesis.</text>
</comment>
<comment type="catalytic activity">
    <reaction evidence="1">
        <text>dTMP + ATP = dTDP + ADP</text>
        <dbReference type="Rhea" id="RHEA:13517"/>
        <dbReference type="ChEBI" id="CHEBI:30616"/>
        <dbReference type="ChEBI" id="CHEBI:58369"/>
        <dbReference type="ChEBI" id="CHEBI:63528"/>
        <dbReference type="ChEBI" id="CHEBI:456216"/>
        <dbReference type="EC" id="2.7.4.9"/>
    </reaction>
</comment>
<comment type="similarity">
    <text evidence="1">Belongs to the thymidylate kinase family.</text>
</comment>
<protein>
    <recommendedName>
        <fullName evidence="1">Thymidylate kinase</fullName>
        <ecNumber evidence="1">2.7.4.9</ecNumber>
    </recommendedName>
    <alternativeName>
        <fullName evidence="1">dTMP kinase</fullName>
    </alternativeName>
</protein>
<name>KTHY_PROM1</name>
<feature type="chain" id="PRO_1000023246" description="Thymidylate kinase">
    <location>
        <begin position="1"/>
        <end position="211"/>
    </location>
</feature>
<feature type="binding site" evidence="1">
    <location>
        <begin position="10"/>
        <end position="17"/>
    </location>
    <ligand>
        <name>ATP</name>
        <dbReference type="ChEBI" id="CHEBI:30616"/>
    </ligand>
</feature>
<organism>
    <name type="scientific">Prochlorococcus marinus (strain NATL1A)</name>
    <dbReference type="NCBI Taxonomy" id="167555"/>
    <lineage>
        <taxon>Bacteria</taxon>
        <taxon>Bacillati</taxon>
        <taxon>Cyanobacteriota</taxon>
        <taxon>Cyanophyceae</taxon>
        <taxon>Synechococcales</taxon>
        <taxon>Prochlorococcaceae</taxon>
        <taxon>Prochlorococcus</taxon>
    </lineage>
</organism>
<sequence>MKGKFIVFEGIDGSGKTTQINQLSKWLISTDLIPENNKLVITREPGGTQLGKSIRSLLLDTSIEKSPDSITELLLYAADRSQHVNEIIRPTLDQGDWVISDRFCGSTLAYQGYGRKLDITLIKDLEAIATQGIAPDITFLLDIPIEESIRRRRNRKDDRIEKEGREFLSNVSLGFQALSEDSHWKKISAIDSKEKIISEIKSEIKKLIKNK</sequence>
<accession>A2BZV6</accession>
<reference key="1">
    <citation type="journal article" date="2007" name="PLoS Genet.">
        <title>Patterns and implications of gene gain and loss in the evolution of Prochlorococcus.</title>
        <authorList>
            <person name="Kettler G.C."/>
            <person name="Martiny A.C."/>
            <person name="Huang K."/>
            <person name="Zucker J."/>
            <person name="Coleman M.L."/>
            <person name="Rodrigue S."/>
            <person name="Chen F."/>
            <person name="Lapidus A."/>
            <person name="Ferriera S."/>
            <person name="Johnson J."/>
            <person name="Steglich C."/>
            <person name="Church G.M."/>
            <person name="Richardson P."/>
            <person name="Chisholm S.W."/>
        </authorList>
    </citation>
    <scope>NUCLEOTIDE SEQUENCE [LARGE SCALE GENOMIC DNA]</scope>
    <source>
        <strain>NATL1A</strain>
    </source>
</reference>